<gene>
    <name type="primary">BRO1</name>
    <name type="ORF">FGRAMPH1_01T17641</name>
    <name type="ORF">FGRRES_05329</name>
    <name type="ORF">FGSG_05329</name>
</gene>
<evidence type="ECO:0000250" key="1"/>
<evidence type="ECO:0000255" key="2"/>
<evidence type="ECO:0000255" key="3">
    <source>
        <dbReference type="PROSITE-ProRule" id="PRU00526"/>
    </source>
</evidence>
<evidence type="ECO:0000256" key="4">
    <source>
        <dbReference type="SAM" id="MobiDB-lite"/>
    </source>
</evidence>
<evidence type="ECO:0000305" key="5"/>
<proteinExistence type="inferred from homology"/>
<dbReference type="EMBL" id="DS231665">
    <property type="protein sequence ID" value="ESU11271.1"/>
    <property type="status" value="ALT_SEQ"/>
    <property type="molecule type" value="Genomic_DNA"/>
</dbReference>
<dbReference type="EMBL" id="HG970334">
    <property type="protein sequence ID" value="SCB64736.1"/>
    <property type="molecule type" value="Genomic_DNA"/>
</dbReference>
<dbReference type="RefSeq" id="XP_011323847.1">
    <property type="nucleotide sequence ID" value="XM_011325545.1"/>
</dbReference>
<dbReference type="SMR" id="Q4IBS9"/>
<dbReference type="FunCoup" id="Q4IBS9">
    <property type="interactions" value="79"/>
</dbReference>
<dbReference type="STRING" id="229533.Q4IBS9"/>
<dbReference type="GeneID" id="23552515"/>
<dbReference type="KEGG" id="fgr:FGSG_05329"/>
<dbReference type="VEuPathDB" id="FungiDB:FGRAMPH1_01G17641"/>
<dbReference type="eggNOG" id="KOG2220">
    <property type="taxonomic scope" value="Eukaryota"/>
</dbReference>
<dbReference type="HOGENOM" id="CLU_003661_0_0_1"/>
<dbReference type="InParanoid" id="Q4IBS9"/>
<dbReference type="OrthoDB" id="123229at110618"/>
<dbReference type="Proteomes" id="UP000070720">
    <property type="component" value="Chromosome 3"/>
</dbReference>
<dbReference type="GO" id="GO:0005768">
    <property type="term" value="C:endosome"/>
    <property type="evidence" value="ECO:0007669"/>
    <property type="project" value="UniProtKB-SubCell"/>
</dbReference>
<dbReference type="GO" id="GO:0043328">
    <property type="term" value="P:protein transport to vacuole involved in ubiquitin-dependent protein catabolic process via the multivesicular body sorting pathway"/>
    <property type="evidence" value="ECO:0007669"/>
    <property type="project" value="TreeGrafter"/>
</dbReference>
<dbReference type="CDD" id="cd09242">
    <property type="entry name" value="BRO1_ScBro1_like"/>
    <property type="match status" value="1"/>
</dbReference>
<dbReference type="CDD" id="cd09237">
    <property type="entry name" value="V_ScBro1_like"/>
    <property type="match status" value="1"/>
</dbReference>
<dbReference type="Gene3D" id="1.20.120.560">
    <property type="entry name" value="alix/aip1 in complex with the ypdl late domain"/>
    <property type="match status" value="1"/>
</dbReference>
<dbReference type="Gene3D" id="1.20.140.50">
    <property type="entry name" value="alix/aip1 like domains"/>
    <property type="match status" value="1"/>
</dbReference>
<dbReference type="Gene3D" id="1.25.40.280">
    <property type="entry name" value="alix/aip1 like domains"/>
    <property type="match status" value="1"/>
</dbReference>
<dbReference type="InterPro" id="IPR025304">
    <property type="entry name" value="ALIX_V_dom"/>
</dbReference>
<dbReference type="InterPro" id="IPR004328">
    <property type="entry name" value="BRO1_dom"/>
</dbReference>
<dbReference type="InterPro" id="IPR038499">
    <property type="entry name" value="BRO1_sf"/>
</dbReference>
<dbReference type="PANTHER" id="PTHR23030">
    <property type="entry name" value="PCD6 INTERACTING PROTEIN-RELATED"/>
    <property type="match status" value="1"/>
</dbReference>
<dbReference type="PANTHER" id="PTHR23030:SF30">
    <property type="entry name" value="TYROSINE-PROTEIN PHOSPHATASE NON-RECEPTOR TYPE 23"/>
    <property type="match status" value="1"/>
</dbReference>
<dbReference type="Pfam" id="PF13949">
    <property type="entry name" value="ALIX_LYPXL_bnd"/>
    <property type="match status" value="1"/>
</dbReference>
<dbReference type="Pfam" id="PF03097">
    <property type="entry name" value="BRO1"/>
    <property type="match status" value="1"/>
</dbReference>
<dbReference type="SMART" id="SM01041">
    <property type="entry name" value="BRO1"/>
    <property type="match status" value="1"/>
</dbReference>
<dbReference type="PROSITE" id="PS51180">
    <property type="entry name" value="BRO1"/>
    <property type="match status" value="1"/>
</dbReference>
<protein>
    <recommendedName>
        <fullName>Vacuolar protein-sorting protein BRO1</fullName>
    </recommendedName>
    <alternativeName>
        <fullName>BRO domain-containing protein 1</fullName>
    </alternativeName>
</protein>
<keyword id="KW-0175">Coiled coil</keyword>
<keyword id="KW-0963">Cytoplasm</keyword>
<keyword id="KW-0967">Endosome</keyword>
<keyword id="KW-0653">Protein transport</keyword>
<keyword id="KW-1185">Reference proteome</keyword>
<keyword id="KW-0813">Transport</keyword>
<name>BRO1_GIBZE</name>
<sequence>MAQSPMISVPLKATNEIDWVEPLKRYIRDTYGDDPERYAEECATLNRLRQDVRGAGKDSTSGRDMLYRYYGQLELLDLRFPVDEQHIKISFTWFDAFTHKSTAQYSLAFEKASIIFNISAVLSCHAAAQDRGEESALKTAYHNFQASAGMFTYINENFLHAPSSDLSRETVKALIHVMLAQAQEVFLEKQVADKKKPALLAKLASQAGYLYSQALEGVQENVTKAIFEKVWLLMTQIKSNLLNSMAQYYQALADEEQDKHGIAVGRLQTAETQAKEAERVARSFPNSVPMSSNLSADCGGFLQELTKRHLSTVQSQLQSALKDNDYIYHKEVPAEASLEAVAKLPAAKPIPVSELYAGQDIQRITGPDLFAKIVPFAVTESASLYDEEKAKLVRAEAERVDTANGEMAASLDYLRLPGALQVLKGGFDQDILPDEDFRQWCEDVSDQENPVTLFDSLRTEKDSILSILDKSTKQLDMEEGVCEKMRSKYENEWTQQPSSRLTTTLRGDIRHYREALDEASRSDNQLAGKLRQNEMDFDEMRRAAKSGEADQLFQRAVAQARARGSNATSPAGLEPNLLDDDFDEGPSVIDQINRVEDILKKLNSIKRERNQVLKDLKEKAHNDDISQILILNKKSISNYEAQLFEQELEKFRPHQNRLLQANHKQSALMKELTSAFNRLLQDKRVQSEQSKYETIQRQRSSVINRYKRAYQEFLDLVAGLQSAKNWYAEMRETVESLEKNVDSFVNNRRSEGAQLLNQIEQERSSNKNSQAEMERERLRGLMDRMSMDPNKSSPQPQQNRPTPPSQYQQSQAPRYPQTNYQGQYQQPNSPPPQQAQQQAYQNFSPPPTTTTTQSFGPPPINTFVQPTYNPSQYGRTPGPTSPPPNQTSFNIGGYRGPASPPPNQSTFGQSQSFGGYGASSTPQTQGGYVPPGFVPPPPPPGPPPLGPQQTFHYGNQPNSAHPNSAYPQSAMPPQQQQQQQQQQQNDPWAGLNAWK</sequence>
<reference key="1">
    <citation type="journal article" date="2007" name="Science">
        <title>The Fusarium graminearum genome reveals a link between localized polymorphism and pathogen specialization.</title>
        <authorList>
            <person name="Cuomo C.A."/>
            <person name="Gueldener U."/>
            <person name="Xu J.-R."/>
            <person name="Trail F."/>
            <person name="Turgeon B.G."/>
            <person name="Di Pietro A."/>
            <person name="Walton J.D."/>
            <person name="Ma L.-J."/>
            <person name="Baker S.E."/>
            <person name="Rep M."/>
            <person name="Adam G."/>
            <person name="Antoniw J."/>
            <person name="Baldwin T."/>
            <person name="Calvo S.E."/>
            <person name="Chang Y.-L."/>
            <person name="DeCaprio D."/>
            <person name="Gale L.R."/>
            <person name="Gnerre S."/>
            <person name="Goswami R.S."/>
            <person name="Hammond-Kosack K."/>
            <person name="Harris L.J."/>
            <person name="Hilburn K."/>
            <person name="Kennell J.C."/>
            <person name="Kroken S."/>
            <person name="Magnuson J.K."/>
            <person name="Mannhaupt G."/>
            <person name="Mauceli E.W."/>
            <person name="Mewes H.-W."/>
            <person name="Mitterbauer R."/>
            <person name="Muehlbauer G."/>
            <person name="Muensterkoetter M."/>
            <person name="Nelson D."/>
            <person name="O'Donnell K."/>
            <person name="Ouellet T."/>
            <person name="Qi W."/>
            <person name="Quesneville H."/>
            <person name="Roncero M.I.G."/>
            <person name="Seong K.-Y."/>
            <person name="Tetko I.V."/>
            <person name="Urban M."/>
            <person name="Waalwijk C."/>
            <person name="Ward T.J."/>
            <person name="Yao J."/>
            <person name="Birren B.W."/>
            <person name="Kistler H.C."/>
        </authorList>
    </citation>
    <scope>NUCLEOTIDE SEQUENCE [LARGE SCALE GENOMIC DNA]</scope>
    <source>
        <strain>ATCC MYA-4620 / CBS 123657 / FGSC 9075 / NRRL 31084 / PH-1</strain>
    </source>
</reference>
<reference key="2">
    <citation type="journal article" date="2010" name="Nature">
        <title>Comparative genomics reveals mobile pathogenicity chromosomes in Fusarium.</title>
        <authorList>
            <person name="Ma L.-J."/>
            <person name="van der Does H.C."/>
            <person name="Borkovich K.A."/>
            <person name="Coleman J.J."/>
            <person name="Daboussi M.-J."/>
            <person name="Di Pietro A."/>
            <person name="Dufresne M."/>
            <person name="Freitag M."/>
            <person name="Grabherr M."/>
            <person name="Henrissat B."/>
            <person name="Houterman P.M."/>
            <person name="Kang S."/>
            <person name="Shim W.-B."/>
            <person name="Woloshuk C."/>
            <person name="Xie X."/>
            <person name="Xu J.-R."/>
            <person name="Antoniw J."/>
            <person name="Baker S.E."/>
            <person name="Bluhm B.H."/>
            <person name="Breakspear A."/>
            <person name="Brown D.W."/>
            <person name="Butchko R.A.E."/>
            <person name="Chapman S."/>
            <person name="Coulson R."/>
            <person name="Coutinho P.M."/>
            <person name="Danchin E.G.J."/>
            <person name="Diener A."/>
            <person name="Gale L.R."/>
            <person name="Gardiner D.M."/>
            <person name="Goff S."/>
            <person name="Hammond-Kosack K.E."/>
            <person name="Hilburn K."/>
            <person name="Hua-Van A."/>
            <person name="Jonkers W."/>
            <person name="Kazan K."/>
            <person name="Kodira C.D."/>
            <person name="Koehrsen M."/>
            <person name="Kumar L."/>
            <person name="Lee Y.-H."/>
            <person name="Li L."/>
            <person name="Manners J.M."/>
            <person name="Miranda-Saavedra D."/>
            <person name="Mukherjee M."/>
            <person name="Park G."/>
            <person name="Park J."/>
            <person name="Park S.-Y."/>
            <person name="Proctor R.H."/>
            <person name="Regev A."/>
            <person name="Ruiz-Roldan M.C."/>
            <person name="Sain D."/>
            <person name="Sakthikumar S."/>
            <person name="Sykes S."/>
            <person name="Schwartz D.C."/>
            <person name="Turgeon B.G."/>
            <person name="Wapinski I."/>
            <person name="Yoder O."/>
            <person name="Young S."/>
            <person name="Zeng Q."/>
            <person name="Zhou S."/>
            <person name="Galagan J."/>
            <person name="Cuomo C.A."/>
            <person name="Kistler H.C."/>
            <person name="Rep M."/>
        </authorList>
    </citation>
    <scope>GENOME REANNOTATION</scope>
    <source>
        <strain>ATCC MYA-4620 / CBS 123657 / FGSC 9075 / NRRL 31084 / PH-1</strain>
    </source>
</reference>
<reference key="3">
    <citation type="journal article" date="2015" name="BMC Genomics">
        <title>The completed genome sequence of the pathogenic ascomycete fungus Fusarium graminearum.</title>
        <authorList>
            <person name="King R."/>
            <person name="Urban M."/>
            <person name="Hammond-Kosack M.C.U."/>
            <person name="Hassani-Pak K."/>
            <person name="Hammond-Kosack K.E."/>
        </authorList>
    </citation>
    <scope>NUCLEOTIDE SEQUENCE [LARGE SCALE GENOMIC DNA]</scope>
    <source>
        <strain>ATCC MYA-4620 / CBS 123657 / FGSC 9075 / NRRL 31084 / PH-1</strain>
    </source>
</reference>
<comment type="function">
    <text evidence="1">Involved in concentration and sorting of cargo proteins of the multivesicular body (MVB) for incorporation into intralumenal vesicles.</text>
</comment>
<comment type="subcellular location">
    <subcellularLocation>
        <location evidence="1">Cytoplasm</location>
    </subcellularLocation>
    <subcellularLocation>
        <location evidence="1">Endosome</location>
    </subcellularLocation>
</comment>
<comment type="similarity">
    <text evidence="5">Belongs to the BRO1 family.</text>
</comment>
<comment type="sequence caution" evidence="5">
    <conflict type="erroneous gene model prediction">
        <sequence resource="EMBL-CDS" id="ESU11271"/>
    </conflict>
</comment>
<accession>Q4IBS9</accession>
<accession>A0A0E0SLK0</accession>
<accession>A0A1C3YK14</accession>
<accession>I1RMX5</accession>
<organism>
    <name type="scientific">Gibberella zeae (strain ATCC MYA-4620 / CBS 123657 / FGSC 9075 / NRRL 31084 / PH-1)</name>
    <name type="common">Wheat head blight fungus</name>
    <name type="synonym">Fusarium graminearum</name>
    <dbReference type="NCBI Taxonomy" id="229533"/>
    <lineage>
        <taxon>Eukaryota</taxon>
        <taxon>Fungi</taxon>
        <taxon>Dikarya</taxon>
        <taxon>Ascomycota</taxon>
        <taxon>Pezizomycotina</taxon>
        <taxon>Sordariomycetes</taxon>
        <taxon>Hypocreomycetidae</taxon>
        <taxon>Hypocreales</taxon>
        <taxon>Nectriaceae</taxon>
        <taxon>Fusarium</taxon>
    </lineage>
</organism>
<feature type="chain" id="PRO_0000218866" description="Vacuolar protein-sorting protein BRO1">
    <location>
        <begin position="1"/>
        <end position="995"/>
    </location>
</feature>
<feature type="domain" description="BRO1" evidence="3">
    <location>
        <begin position="5"/>
        <end position="407"/>
    </location>
</feature>
<feature type="region of interest" description="Disordered" evidence="4">
    <location>
        <begin position="755"/>
        <end position="995"/>
    </location>
</feature>
<feature type="coiled-coil region" evidence="2">
    <location>
        <begin position="720"/>
        <end position="786"/>
    </location>
</feature>
<feature type="compositionally biased region" description="Basic and acidic residues" evidence="4">
    <location>
        <begin position="772"/>
        <end position="786"/>
    </location>
</feature>
<feature type="compositionally biased region" description="Polar residues" evidence="4">
    <location>
        <begin position="789"/>
        <end position="818"/>
    </location>
</feature>
<feature type="compositionally biased region" description="Polar residues" evidence="4">
    <location>
        <begin position="862"/>
        <end position="874"/>
    </location>
</feature>
<feature type="compositionally biased region" description="Polar residues" evidence="4">
    <location>
        <begin position="904"/>
        <end position="925"/>
    </location>
</feature>
<feature type="compositionally biased region" description="Pro residues" evidence="4">
    <location>
        <begin position="932"/>
        <end position="946"/>
    </location>
</feature>
<feature type="compositionally biased region" description="Polar residues" evidence="4">
    <location>
        <begin position="948"/>
        <end position="973"/>
    </location>
</feature>
<feature type="compositionally biased region" description="Low complexity" evidence="4">
    <location>
        <begin position="974"/>
        <end position="984"/>
    </location>
</feature>